<proteinExistence type="inferred from homology"/>
<keyword id="KW-0489">Methyltransferase</keyword>
<keyword id="KW-1185">Reference proteome</keyword>
<keyword id="KW-0694">RNA-binding</keyword>
<keyword id="KW-0698">rRNA processing</keyword>
<keyword id="KW-0949">S-adenosyl-L-methionine</keyword>
<keyword id="KW-0808">Transferase</keyword>
<organism>
    <name type="scientific">Schizosaccharomyces pombe (strain 972 / ATCC 24843)</name>
    <name type="common">Fission yeast</name>
    <dbReference type="NCBI Taxonomy" id="284812"/>
    <lineage>
        <taxon>Eukaryota</taxon>
        <taxon>Fungi</taxon>
        <taxon>Dikarya</taxon>
        <taxon>Ascomycota</taxon>
        <taxon>Taphrinomycotina</taxon>
        <taxon>Schizosaccharomycetes</taxon>
        <taxon>Schizosaccharomycetales</taxon>
        <taxon>Schizosaccharomycetaceae</taxon>
        <taxon>Schizosaccharomyces</taxon>
    </lineage>
</organism>
<protein>
    <recommendedName>
        <fullName>Dimethyladenosine transferase</fullName>
        <ecNumber>2.1.1.183</ecNumber>
    </recommendedName>
    <alternativeName>
        <fullName>18S rRNA (adenine(1779)-N(6)/adenine(1780)-N(6))-dimethyltransferase</fullName>
    </alternativeName>
    <alternativeName>
        <fullName>18S rRNA dimethylase</fullName>
    </alternativeName>
    <alternativeName>
        <fullName>S-adenosylmethionine-6-N', N'-adenosyl(rRNA) dimethyltransferase</fullName>
    </alternativeName>
</protein>
<sequence>MGKIRVRNNNAASDAEVRNTVFKFNKDFGQHILKNPLVAQGIVDKADLKQSDTVLEVGPGTGNLTVRMLEKARKVIAVEMDPRMAAEITKRVQGTPKEKKLQVVLGDVIKTDLPYFDVCVSNTPYQISSPLVFKLLQQRPAPRAAILMFQREFALRLVARPGDPLYCRLSANVQMWAHVKHIMKVGKNNFRPPPLVESSVVRIEPKNPPPPLAFEEWDGLLRIVFLRKNKTIGACFKTSSIIEMVENNYRTWCSQNERMVEEDFDVKSLIDGVLQQCNLQDARASKCGQTEFLSLLHAFHQVGVHFA</sequence>
<name>DIM1_SCHPO</name>
<gene>
    <name type="primary">dim1</name>
    <name type="ORF">SPBC336.02</name>
</gene>
<dbReference type="EC" id="2.1.1.183"/>
<dbReference type="EMBL" id="Z68293">
    <property type="protein sequence ID" value="CAA92585.1"/>
    <property type="molecule type" value="Genomic_DNA"/>
</dbReference>
<dbReference type="EMBL" id="CU329671">
    <property type="protein sequence ID" value="CAB58154.1"/>
    <property type="molecule type" value="Genomic_DNA"/>
</dbReference>
<dbReference type="PIR" id="T40240">
    <property type="entry name" value="T40240"/>
</dbReference>
<dbReference type="PIR" id="T43249">
    <property type="entry name" value="T43249"/>
</dbReference>
<dbReference type="SMR" id="Q9USU2"/>
<dbReference type="BioGRID" id="276779">
    <property type="interactions" value="1"/>
</dbReference>
<dbReference type="FunCoup" id="Q9USU2">
    <property type="interactions" value="469"/>
</dbReference>
<dbReference type="STRING" id="284812.Q9USU2"/>
<dbReference type="iPTMnet" id="Q9USU2"/>
<dbReference type="PaxDb" id="4896-SPBC336.02.1"/>
<dbReference type="EnsemblFungi" id="SPBC336.02.1">
    <property type="protein sequence ID" value="SPBC336.02.1:pep"/>
    <property type="gene ID" value="SPBC336.02"/>
</dbReference>
<dbReference type="KEGG" id="spo:2540247"/>
<dbReference type="PomBase" id="SPBC336.02"/>
<dbReference type="VEuPathDB" id="FungiDB:SPBC336.02"/>
<dbReference type="eggNOG" id="KOG0820">
    <property type="taxonomic scope" value="Eukaryota"/>
</dbReference>
<dbReference type="HOGENOM" id="CLU_041220_2_0_1"/>
<dbReference type="InParanoid" id="Q9USU2"/>
<dbReference type="OMA" id="GMFQKEV"/>
<dbReference type="PhylomeDB" id="Q9USU2"/>
<dbReference type="PRO" id="PR:Q9USU2"/>
<dbReference type="Proteomes" id="UP000002485">
    <property type="component" value="Chromosome II"/>
</dbReference>
<dbReference type="GO" id="GO:0072686">
    <property type="term" value="C:mitotic spindle"/>
    <property type="evidence" value="ECO:0007005"/>
    <property type="project" value="PomBase"/>
</dbReference>
<dbReference type="GO" id="GO:0005730">
    <property type="term" value="C:nucleolus"/>
    <property type="evidence" value="ECO:0007005"/>
    <property type="project" value="PomBase"/>
</dbReference>
<dbReference type="GO" id="GO:0005634">
    <property type="term" value="C:nucleus"/>
    <property type="evidence" value="ECO:0007005"/>
    <property type="project" value="PomBase"/>
</dbReference>
<dbReference type="GO" id="GO:0052909">
    <property type="term" value="F:18S rRNA (adenine(1779)-N(6)/adenine(1780)-N(6))-dimethyltransferase activity"/>
    <property type="evidence" value="ECO:0000266"/>
    <property type="project" value="PomBase"/>
</dbReference>
<dbReference type="GO" id="GO:0003723">
    <property type="term" value="F:RNA binding"/>
    <property type="evidence" value="ECO:0007669"/>
    <property type="project" value="UniProtKB-KW"/>
</dbReference>
<dbReference type="GO" id="GO:0000179">
    <property type="term" value="F:rRNA (adenine-N6,N6-)-dimethyltransferase activity"/>
    <property type="evidence" value="ECO:0000318"/>
    <property type="project" value="GO_Central"/>
</dbReference>
<dbReference type="GO" id="GO:0000462">
    <property type="term" value="P:maturation of SSU-rRNA from tricistronic rRNA transcript (SSU-rRNA, 5.8S rRNA, LSU-rRNA)"/>
    <property type="evidence" value="ECO:0000266"/>
    <property type="project" value="PomBase"/>
</dbReference>
<dbReference type="GO" id="GO:0031167">
    <property type="term" value="P:rRNA methylation"/>
    <property type="evidence" value="ECO:0000318"/>
    <property type="project" value="GO_Central"/>
</dbReference>
<dbReference type="CDD" id="cd02440">
    <property type="entry name" value="AdoMet_MTases"/>
    <property type="match status" value="1"/>
</dbReference>
<dbReference type="FunFam" id="1.10.8.480:FF:000002">
    <property type="entry name" value="rRNA adenine N(6)-methyltransferase"/>
    <property type="match status" value="1"/>
</dbReference>
<dbReference type="FunFam" id="3.40.50.150:FF:000007">
    <property type="entry name" value="rRNA adenine N(6)-methyltransferase"/>
    <property type="match status" value="1"/>
</dbReference>
<dbReference type="Gene3D" id="1.10.8.480">
    <property type="match status" value="1"/>
</dbReference>
<dbReference type="Gene3D" id="3.40.50.150">
    <property type="entry name" value="Vaccinia Virus protein VP39"/>
    <property type="match status" value="1"/>
</dbReference>
<dbReference type="InterPro" id="IPR001737">
    <property type="entry name" value="KsgA/Erm"/>
</dbReference>
<dbReference type="InterPro" id="IPR020596">
    <property type="entry name" value="rRNA_Ade_Mease_Trfase_CS"/>
</dbReference>
<dbReference type="InterPro" id="IPR020598">
    <property type="entry name" value="rRNA_Ade_methylase_Trfase_N"/>
</dbReference>
<dbReference type="InterPro" id="IPR011530">
    <property type="entry name" value="rRNA_adenine_dimethylase"/>
</dbReference>
<dbReference type="InterPro" id="IPR029063">
    <property type="entry name" value="SAM-dependent_MTases_sf"/>
</dbReference>
<dbReference type="NCBIfam" id="TIGR00755">
    <property type="entry name" value="ksgA"/>
    <property type="match status" value="1"/>
</dbReference>
<dbReference type="PANTHER" id="PTHR11727">
    <property type="entry name" value="DIMETHYLADENOSINE TRANSFERASE"/>
    <property type="match status" value="1"/>
</dbReference>
<dbReference type="PANTHER" id="PTHR11727:SF7">
    <property type="entry name" value="DIMETHYLADENOSINE TRANSFERASE-RELATED"/>
    <property type="match status" value="1"/>
</dbReference>
<dbReference type="Pfam" id="PF00398">
    <property type="entry name" value="RrnaAD"/>
    <property type="match status" value="1"/>
</dbReference>
<dbReference type="SMART" id="SM00650">
    <property type="entry name" value="rADc"/>
    <property type="match status" value="1"/>
</dbReference>
<dbReference type="SUPFAM" id="SSF53335">
    <property type="entry name" value="S-adenosyl-L-methionine-dependent methyltransferases"/>
    <property type="match status" value="1"/>
</dbReference>
<dbReference type="PROSITE" id="PS01131">
    <property type="entry name" value="RRNA_A_DIMETH"/>
    <property type="match status" value="1"/>
</dbReference>
<dbReference type="PROSITE" id="PS51689">
    <property type="entry name" value="SAM_RNA_A_N6_MT"/>
    <property type="match status" value="1"/>
</dbReference>
<evidence type="ECO:0000255" key="1">
    <source>
        <dbReference type="PROSITE-ProRule" id="PRU01026"/>
    </source>
</evidence>
<evidence type="ECO:0000305" key="2"/>
<reference key="1">
    <citation type="submission" date="1995-12" db="EMBL/GenBank/DDBJ databases">
        <title>Cloning and comparative analysis of the SpDIM1 gene from Schizosaccharomyces pombe.</title>
        <authorList>
            <person name="Housen I."/>
            <person name="Demonte D."/>
            <person name="Lafontaine D."/>
            <person name="Vandenhaute J."/>
        </authorList>
    </citation>
    <scope>NUCLEOTIDE SEQUENCE [GENOMIC DNA]</scope>
</reference>
<reference key="2">
    <citation type="journal article" date="2002" name="Nature">
        <title>The genome sequence of Schizosaccharomyces pombe.</title>
        <authorList>
            <person name="Wood V."/>
            <person name="Gwilliam R."/>
            <person name="Rajandream M.A."/>
            <person name="Lyne M.H."/>
            <person name="Lyne R."/>
            <person name="Stewart A."/>
            <person name="Sgouros J.G."/>
            <person name="Peat N."/>
            <person name="Hayles J."/>
            <person name="Baker S.G."/>
            <person name="Basham D."/>
            <person name="Bowman S."/>
            <person name="Brooks K."/>
            <person name="Brown D."/>
            <person name="Brown S."/>
            <person name="Chillingworth T."/>
            <person name="Churcher C.M."/>
            <person name="Collins M."/>
            <person name="Connor R."/>
            <person name="Cronin A."/>
            <person name="Davis P."/>
            <person name="Feltwell T."/>
            <person name="Fraser A."/>
            <person name="Gentles S."/>
            <person name="Goble A."/>
            <person name="Hamlin N."/>
            <person name="Harris D.E."/>
            <person name="Hidalgo J."/>
            <person name="Hodgson G."/>
            <person name="Holroyd S."/>
            <person name="Hornsby T."/>
            <person name="Howarth S."/>
            <person name="Huckle E.J."/>
            <person name="Hunt S."/>
            <person name="Jagels K."/>
            <person name="James K.D."/>
            <person name="Jones L."/>
            <person name="Jones M."/>
            <person name="Leather S."/>
            <person name="McDonald S."/>
            <person name="McLean J."/>
            <person name="Mooney P."/>
            <person name="Moule S."/>
            <person name="Mungall K.L."/>
            <person name="Murphy L.D."/>
            <person name="Niblett D."/>
            <person name="Odell C."/>
            <person name="Oliver K."/>
            <person name="O'Neil S."/>
            <person name="Pearson D."/>
            <person name="Quail M.A."/>
            <person name="Rabbinowitsch E."/>
            <person name="Rutherford K.M."/>
            <person name="Rutter S."/>
            <person name="Saunders D."/>
            <person name="Seeger K."/>
            <person name="Sharp S."/>
            <person name="Skelton J."/>
            <person name="Simmonds M.N."/>
            <person name="Squares R."/>
            <person name="Squares S."/>
            <person name="Stevens K."/>
            <person name="Taylor K."/>
            <person name="Taylor R.G."/>
            <person name="Tivey A."/>
            <person name="Walsh S.V."/>
            <person name="Warren T."/>
            <person name="Whitehead S."/>
            <person name="Woodward J.R."/>
            <person name="Volckaert G."/>
            <person name="Aert R."/>
            <person name="Robben J."/>
            <person name="Grymonprez B."/>
            <person name="Weltjens I."/>
            <person name="Vanstreels E."/>
            <person name="Rieger M."/>
            <person name="Schaefer M."/>
            <person name="Mueller-Auer S."/>
            <person name="Gabel C."/>
            <person name="Fuchs M."/>
            <person name="Duesterhoeft A."/>
            <person name="Fritzc C."/>
            <person name="Holzer E."/>
            <person name="Moestl D."/>
            <person name="Hilbert H."/>
            <person name="Borzym K."/>
            <person name="Langer I."/>
            <person name="Beck A."/>
            <person name="Lehrach H."/>
            <person name="Reinhardt R."/>
            <person name="Pohl T.M."/>
            <person name="Eger P."/>
            <person name="Zimmermann W."/>
            <person name="Wedler H."/>
            <person name="Wambutt R."/>
            <person name="Purnelle B."/>
            <person name="Goffeau A."/>
            <person name="Cadieu E."/>
            <person name="Dreano S."/>
            <person name="Gloux S."/>
            <person name="Lelaure V."/>
            <person name="Mottier S."/>
            <person name="Galibert F."/>
            <person name="Aves S.J."/>
            <person name="Xiang Z."/>
            <person name="Hunt C."/>
            <person name="Moore K."/>
            <person name="Hurst S.M."/>
            <person name="Lucas M."/>
            <person name="Rochet M."/>
            <person name="Gaillardin C."/>
            <person name="Tallada V.A."/>
            <person name="Garzon A."/>
            <person name="Thode G."/>
            <person name="Daga R.R."/>
            <person name="Cruzado L."/>
            <person name="Jimenez J."/>
            <person name="Sanchez M."/>
            <person name="del Rey F."/>
            <person name="Benito J."/>
            <person name="Dominguez A."/>
            <person name="Revuelta J.L."/>
            <person name="Moreno S."/>
            <person name="Armstrong J."/>
            <person name="Forsburg S.L."/>
            <person name="Cerutti L."/>
            <person name="Lowe T."/>
            <person name="McCombie W.R."/>
            <person name="Paulsen I."/>
            <person name="Potashkin J."/>
            <person name="Shpakovski G.V."/>
            <person name="Ussery D."/>
            <person name="Barrell B.G."/>
            <person name="Nurse P."/>
        </authorList>
    </citation>
    <scope>NUCLEOTIDE SEQUENCE [LARGE SCALE GENOMIC DNA]</scope>
    <source>
        <strain>972 / ATCC 24843</strain>
    </source>
</reference>
<feature type="chain" id="PRO_0000101462" description="Dimethyladenosine transferase">
    <location>
        <begin position="1"/>
        <end position="307"/>
    </location>
</feature>
<feature type="binding site" evidence="1">
    <location>
        <position position="31"/>
    </location>
    <ligand>
        <name>S-adenosyl-L-methionine</name>
        <dbReference type="ChEBI" id="CHEBI:59789"/>
    </ligand>
</feature>
<feature type="binding site" evidence="1">
    <location>
        <position position="33"/>
    </location>
    <ligand>
        <name>S-adenosyl-L-methionine</name>
        <dbReference type="ChEBI" id="CHEBI:59789"/>
    </ligand>
</feature>
<feature type="binding site" evidence="1">
    <location>
        <position position="58"/>
    </location>
    <ligand>
        <name>S-adenosyl-L-methionine</name>
        <dbReference type="ChEBI" id="CHEBI:59789"/>
    </ligand>
</feature>
<feature type="binding site" evidence="1">
    <location>
        <position position="79"/>
    </location>
    <ligand>
        <name>S-adenosyl-L-methionine</name>
        <dbReference type="ChEBI" id="CHEBI:59789"/>
    </ligand>
</feature>
<feature type="binding site" evidence="1">
    <location>
        <position position="107"/>
    </location>
    <ligand>
        <name>S-adenosyl-L-methionine</name>
        <dbReference type="ChEBI" id="CHEBI:59789"/>
    </ligand>
</feature>
<feature type="binding site" evidence="1">
    <location>
        <position position="122"/>
    </location>
    <ligand>
        <name>S-adenosyl-L-methionine</name>
        <dbReference type="ChEBI" id="CHEBI:59789"/>
    </ligand>
</feature>
<feature type="sequence conflict" description="In Ref. 1; CAA92585." evidence="2" ref="1">
    <original>S</original>
    <variation>P</variation>
    <location>
        <position position="170"/>
    </location>
</feature>
<feature type="sequence conflict" description="In Ref. 1; CAA92585." evidence="2" ref="1">
    <original>TEF</original>
    <variation>QS</variation>
    <location>
        <begin position="290"/>
        <end position="292"/>
    </location>
</feature>
<feature type="sequence conflict" description="In Ref. 1; CAA92585." evidence="2" ref="1">
    <original>A</original>
    <variation>P</variation>
    <location>
        <position position="298"/>
    </location>
</feature>
<feature type="sequence conflict" description="In Ref. 1; CAA92585." evidence="2" ref="1">
    <original>VHFA</original>
    <variation>RSFWLMGQDGVFH</variation>
    <location>
        <begin position="304"/>
        <end position="307"/>
    </location>
</feature>
<comment type="function">
    <text>Specifically dimethylates two adjacent adenosines in the loop of a conserved hairpin near the 3'-end of 18S rRNA in the 40S particle.</text>
</comment>
<comment type="catalytic activity">
    <reaction>
        <text>adenosine(1779)/adenosine(1780) in 18S rRNA + 4 S-adenosyl-L-methionine = N(6)-dimethyladenosine(1779)/N(6)-dimethyladenosine(1780) in 18S rRNA + 4 S-adenosyl-L-homocysteine + 4 H(+)</text>
        <dbReference type="Rhea" id="RHEA:42780"/>
        <dbReference type="Rhea" id="RHEA-COMP:10234"/>
        <dbReference type="Rhea" id="RHEA-COMP:10236"/>
        <dbReference type="ChEBI" id="CHEBI:15378"/>
        <dbReference type="ChEBI" id="CHEBI:57856"/>
        <dbReference type="ChEBI" id="CHEBI:59789"/>
        <dbReference type="ChEBI" id="CHEBI:74411"/>
        <dbReference type="ChEBI" id="CHEBI:74493"/>
        <dbReference type="EC" id="2.1.1.183"/>
    </reaction>
</comment>
<comment type="similarity">
    <text evidence="1">Belongs to the class I-like SAM-binding methyltransferase superfamily. rRNA adenine N(6)-methyltransferase family.</text>
</comment>
<accession>Q9USU2</accession>
<accession>Q9Y7V3</accession>